<protein>
    <recommendedName>
        <fullName evidence="1">UPF0391 membrane protein ABSDF3618</fullName>
    </recommendedName>
</protein>
<reference key="1">
    <citation type="journal article" date="2008" name="PLoS ONE">
        <title>Comparative analysis of Acinetobacters: three genomes for three lifestyles.</title>
        <authorList>
            <person name="Vallenet D."/>
            <person name="Nordmann P."/>
            <person name="Barbe V."/>
            <person name="Poirel L."/>
            <person name="Mangenot S."/>
            <person name="Bataille E."/>
            <person name="Dossat C."/>
            <person name="Gas S."/>
            <person name="Kreimeyer A."/>
            <person name="Lenoble P."/>
            <person name="Oztas S."/>
            <person name="Poulain J."/>
            <person name="Segurens B."/>
            <person name="Robert C."/>
            <person name="Abergel C."/>
            <person name="Claverie J.-M."/>
            <person name="Raoult D."/>
            <person name="Medigue C."/>
            <person name="Weissenbach J."/>
            <person name="Cruveiller S."/>
        </authorList>
    </citation>
    <scope>NUCLEOTIDE SEQUENCE [LARGE SCALE GENOMIC DNA]</scope>
    <source>
        <strain>SDF</strain>
    </source>
</reference>
<comment type="subcellular location">
    <subcellularLocation>
        <location evidence="1">Cell membrane</location>
        <topology evidence="1">Multi-pass membrane protein</topology>
    </subcellularLocation>
</comment>
<comment type="similarity">
    <text evidence="1">Belongs to the UPF0391 family.</text>
</comment>
<gene>
    <name type="ordered locus">ABSDF3618</name>
</gene>
<accession>B0VPY4</accession>
<name>Y3618_ACIBS</name>
<keyword id="KW-1003">Cell membrane</keyword>
<keyword id="KW-0472">Membrane</keyword>
<keyword id="KW-0812">Transmembrane</keyword>
<keyword id="KW-1133">Transmembrane helix</keyword>
<evidence type="ECO:0000255" key="1">
    <source>
        <dbReference type="HAMAP-Rule" id="MF_01361"/>
    </source>
</evidence>
<dbReference type="EMBL" id="CU468230">
    <property type="protein sequence ID" value="CAP02875.1"/>
    <property type="molecule type" value="Genomic_DNA"/>
</dbReference>
<dbReference type="KEGG" id="abm:ABSDF3618"/>
<dbReference type="HOGENOM" id="CLU_187346_2_0_6"/>
<dbReference type="BioCyc" id="ABAU509170:GCL9-2983-MONOMER"/>
<dbReference type="Proteomes" id="UP000001741">
    <property type="component" value="Chromosome"/>
</dbReference>
<dbReference type="GO" id="GO:0005886">
    <property type="term" value="C:plasma membrane"/>
    <property type="evidence" value="ECO:0007669"/>
    <property type="project" value="UniProtKB-SubCell"/>
</dbReference>
<dbReference type="HAMAP" id="MF_01361">
    <property type="entry name" value="UPF0391"/>
    <property type="match status" value="1"/>
</dbReference>
<dbReference type="InterPro" id="IPR009760">
    <property type="entry name" value="DUF1328"/>
</dbReference>
<dbReference type="NCBIfam" id="NF010227">
    <property type="entry name" value="PRK13682.1-2"/>
    <property type="match status" value="1"/>
</dbReference>
<dbReference type="NCBIfam" id="NF010229">
    <property type="entry name" value="PRK13682.1-4"/>
    <property type="match status" value="1"/>
</dbReference>
<dbReference type="Pfam" id="PF07043">
    <property type="entry name" value="DUF1328"/>
    <property type="match status" value="1"/>
</dbReference>
<dbReference type="PIRSF" id="PIRSF036466">
    <property type="entry name" value="UCP036466"/>
    <property type="match status" value="1"/>
</dbReference>
<sequence length="52" mass="5462">MFRWAIIFAVIALIASLLGFGGVAGLSKDFAVILLVIAVILAVIGFISRGRT</sequence>
<proteinExistence type="inferred from homology"/>
<organism>
    <name type="scientific">Acinetobacter baumannii (strain SDF)</name>
    <dbReference type="NCBI Taxonomy" id="509170"/>
    <lineage>
        <taxon>Bacteria</taxon>
        <taxon>Pseudomonadati</taxon>
        <taxon>Pseudomonadota</taxon>
        <taxon>Gammaproteobacteria</taxon>
        <taxon>Moraxellales</taxon>
        <taxon>Moraxellaceae</taxon>
        <taxon>Acinetobacter</taxon>
        <taxon>Acinetobacter calcoaceticus/baumannii complex</taxon>
    </lineage>
</organism>
<feature type="chain" id="PRO_1000143701" description="UPF0391 membrane protein ABSDF3618">
    <location>
        <begin position="1"/>
        <end position="52"/>
    </location>
</feature>
<feature type="transmembrane region" description="Helical" evidence="1">
    <location>
        <begin position="6"/>
        <end position="26"/>
    </location>
</feature>
<feature type="transmembrane region" description="Helical" evidence="1">
    <location>
        <begin position="30"/>
        <end position="50"/>
    </location>
</feature>